<proteinExistence type="inferred from homology"/>
<organism>
    <name type="scientific">Yersinia pestis bv. Antiqua (strain Nepal516)</name>
    <dbReference type="NCBI Taxonomy" id="377628"/>
    <lineage>
        <taxon>Bacteria</taxon>
        <taxon>Pseudomonadati</taxon>
        <taxon>Pseudomonadota</taxon>
        <taxon>Gammaproteobacteria</taxon>
        <taxon>Enterobacterales</taxon>
        <taxon>Yersiniaceae</taxon>
        <taxon>Yersinia</taxon>
    </lineage>
</organism>
<gene>
    <name evidence="1" type="primary">lptD</name>
    <name type="synonym">imp</name>
    <name type="synonym">ostA</name>
    <name type="ordered locus">YPN_0369</name>
    <name type="ORF">YP516_0377</name>
</gene>
<reference key="1">
    <citation type="journal article" date="2006" name="J. Bacteriol.">
        <title>Complete genome sequence of Yersinia pestis strains Antiqua and Nepal516: evidence of gene reduction in an emerging pathogen.</title>
        <authorList>
            <person name="Chain P.S.G."/>
            <person name="Hu P."/>
            <person name="Malfatti S.A."/>
            <person name="Radnedge L."/>
            <person name="Larimer F."/>
            <person name="Vergez L.M."/>
            <person name="Worsham P."/>
            <person name="Chu M.C."/>
            <person name="Andersen G.L."/>
        </authorList>
    </citation>
    <scope>NUCLEOTIDE SEQUENCE [LARGE SCALE GENOMIC DNA]</scope>
    <source>
        <strain>Nepal516</strain>
    </source>
</reference>
<reference key="2">
    <citation type="submission" date="2009-04" db="EMBL/GenBank/DDBJ databases">
        <title>Yersinia pestis Nepal516A whole genome shotgun sequencing project.</title>
        <authorList>
            <person name="Plunkett G. III"/>
            <person name="Anderson B.D."/>
            <person name="Baumler D.J."/>
            <person name="Burland V."/>
            <person name="Cabot E.L."/>
            <person name="Glasner J.D."/>
            <person name="Mau B."/>
            <person name="Neeno-Eckwall E."/>
            <person name="Perna N.T."/>
            <person name="Munk A.C."/>
            <person name="Tapia R."/>
            <person name="Green L.D."/>
            <person name="Rogers Y.C."/>
            <person name="Detter J.C."/>
            <person name="Bruce D.C."/>
            <person name="Brettin T.S."/>
        </authorList>
    </citation>
    <scope>NUCLEOTIDE SEQUENCE [LARGE SCALE GENOMIC DNA]</scope>
    <source>
        <strain>Nepal516</strain>
    </source>
</reference>
<feature type="signal peptide" evidence="1">
    <location>
        <begin position="1"/>
        <end position="24"/>
    </location>
</feature>
<feature type="chain" id="PRO_5000115090" description="LPS-assembly protein LptD">
    <location>
        <begin position="25"/>
        <end position="780"/>
    </location>
</feature>
<protein>
    <recommendedName>
        <fullName evidence="1">LPS-assembly protein LptD</fullName>
    </recommendedName>
</protein>
<name>LPTD_YERPN</name>
<keyword id="KW-0998">Cell outer membrane</keyword>
<keyword id="KW-0472">Membrane</keyword>
<keyword id="KW-0732">Signal</keyword>
<comment type="function">
    <text evidence="1">Together with LptE, is involved in the assembly of lipopolysaccharide (LPS) at the surface of the outer membrane.</text>
</comment>
<comment type="subunit">
    <text evidence="1">Component of the lipopolysaccharide transport and assembly complex. Interacts with LptE and LptA.</text>
</comment>
<comment type="subcellular location">
    <subcellularLocation>
        <location evidence="1">Cell outer membrane</location>
    </subcellularLocation>
</comment>
<comment type="similarity">
    <text evidence="1">Belongs to the LptD family.</text>
</comment>
<comment type="sequence caution" evidence="2">
    <conflict type="erroneous initiation">
        <sequence resource="EMBL-CDS" id="ABG16701"/>
    </conflict>
</comment>
<dbReference type="EMBL" id="CP000305">
    <property type="protein sequence ID" value="ABG16701.1"/>
    <property type="status" value="ALT_INIT"/>
    <property type="molecule type" value="Genomic_DNA"/>
</dbReference>
<dbReference type="EMBL" id="ACNQ01000006">
    <property type="protein sequence ID" value="EEO78153.1"/>
    <property type="molecule type" value="Genomic_DNA"/>
</dbReference>
<dbReference type="RefSeq" id="WP_002228111.1">
    <property type="nucleotide sequence ID" value="NZ_ACNQ01000006.1"/>
</dbReference>
<dbReference type="SMR" id="Q1CMS9"/>
<dbReference type="GeneID" id="57974115"/>
<dbReference type="KEGG" id="ypn:YPN_0369"/>
<dbReference type="HOGENOM" id="CLU_009039_2_0_6"/>
<dbReference type="Proteomes" id="UP000008936">
    <property type="component" value="Chromosome"/>
</dbReference>
<dbReference type="GO" id="GO:0009279">
    <property type="term" value="C:cell outer membrane"/>
    <property type="evidence" value="ECO:0007669"/>
    <property type="project" value="UniProtKB-SubCell"/>
</dbReference>
<dbReference type="GO" id="GO:1990351">
    <property type="term" value="C:transporter complex"/>
    <property type="evidence" value="ECO:0007669"/>
    <property type="project" value="TreeGrafter"/>
</dbReference>
<dbReference type="GO" id="GO:0043165">
    <property type="term" value="P:Gram-negative-bacterium-type cell outer membrane assembly"/>
    <property type="evidence" value="ECO:0007669"/>
    <property type="project" value="UniProtKB-UniRule"/>
</dbReference>
<dbReference type="GO" id="GO:0015920">
    <property type="term" value="P:lipopolysaccharide transport"/>
    <property type="evidence" value="ECO:0007669"/>
    <property type="project" value="InterPro"/>
</dbReference>
<dbReference type="Gene3D" id="2.60.450.10">
    <property type="entry name" value="Lipopolysaccharide (LPS) transport protein A like domain"/>
    <property type="match status" value="1"/>
</dbReference>
<dbReference type="HAMAP" id="MF_01411">
    <property type="entry name" value="LPS_assembly_LptD"/>
    <property type="match status" value="1"/>
</dbReference>
<dbReference type="InterPro" id="IPR020889">
    <property type="entry name" value="LipoPS_assembly_LptD"/>
</dbReference>
<dbReference type="InterPro" id="IPR050218">
    <property type="entry name" value="LptD"/>
</dbReference>
<dbReference type="InterPro" id="IPR007543">
    <property type="entry name" value="LptD_C"/>
</dbReference>
<dbReference type="InterPro" id="IPR005653">
    <property type="entry name" value="OstA-like_N"/>
</dbReference>
<dbReference type="NCBIfam" id="NF002997">
    <property type="entry name" value="PRK03761.1"/>
    <property type="match status" value="1"/>
</dbReference>
<dbReference type="PANTHER" id="PTHR30189">
    <property type="entry name" value="LPS-ASSEMBLY PROTEIN"/>
    <property type="match status" value="1"/>
</dbReference>
<dbReference type="PANTHER" id="PTHR30189:SF1">
    <property type="entry name" value="LPS-ASSEMBLY PROTEIN LPTD"/>
    <property type="match status" value="1"/>
</dbReference>
<dbReference type="Pfam" id="PF04453">
    <property type="entry name" value="LptD"/>
    <property type="match status" value="1"/>
</dbReference>
<dbReference type="Pfam" id="PF03968">
    <property type="entry name" value="LptD_N"/>
    <property type="match status" value="1"/>
</dbReference>
<evidence type="ECO:0000255" key="1">
    <source>
        <dbReference type="HAMAP-Rule" id="MF_01411"/>
    </source>
</evidence>
<evidence type="ECO:0000305" key="2"/>
<accession>Q1CMS9</accession>
<accession>C4GNS1</accession>
<sequence length="780" mass="87909">MKKRFPTLLATLIWTALYSQHTLADLAEQCMLGVPTYDQPLVTGDPNQLPVRINADKTEANYPDNALFTGNVIVQQGNSTLTANQVELTQVQKPGEVIPLRTVTATGDVNYDDPQIKLKGPKGWSNLNTKDTDMDKGKYQMVGRQGRGDADLMKLRDQSRYTILKNGTFTSCLPGDNSWSVVGSEVIHDREEQVVEVWNARFKIGKVPVFYSPYMQLPVGDKRRSGFLIPNAKFTSNNGFEFLLPYYWNIAPNFDATITPHYMERRGLQWQNEFRYLLAPGSGTMALDWLPNDRIYTGPDGTDKNATRWLYYWGHSGVMDQVWRFNINYTRVSDPAYFTDLTSQYGSTTDGYATQIFTAGYANENWNATLSSKQFQVFTAAGNSNAYRAQPQLDMNYYKNDVGPFDMHVYGQAAKFTSVNPTNPEASRFHIEPTVNLPLSNSWGSINTEAKLLATHYQQDIPASFADNASNPKLKDSVNRVLPQFKVDGKVVFDRSMDWATGFTQTLEPRAQYLYVPYRNQDDIYIYDTTLMQSDYSGLFRDRTYSGLDRIASANQVSTGLTSRIYDDARVERFNVSVGQIYYFSRSRTGNTEAIDNSNATGSLVWAGDTFWRINDQLGLKGGAQYDTRLGSLTLGNAIMEYRKDADRMIQLNYRYASPKYIQAAVPKVYNPDYQQGISQVGTTASWPIADRWAIVGAYYYDTKAKQPASQLVGLQYNTCCWAVNLGYERKITGWNAQGQTSKYDNKIGFNIELRGLSGGHSLGTAQMLNSGILPYQSAF</sequence>